<reference key="1">
    <citation type="journal article" date="2002" name="Enzyme Microb. Technol.">
        <title>Cloning the gene encoding acetyl xylan esterase from Aspergillus ficuum and its expression in Pichia pastoris.</title>
        <authorList>
            <person name="Chung H.-J."/>
            <person name="Park S.-M."/>
            <person name="Kim H.-R."/>
            <person name="Yang M.-S."/>
            <person name="Kim D.-H."/>
        </authorList>
    </citation>
    <scope>NUCLEOTIDE SEQUENCE [GENOMIC DNA]</scope>
    <scope>FUNCTION</scope>
    <scope>GLYCOSYLATION</scope>
    <scope>BIOPHYSICOCHEMICAL PROPERTIES</scope>
</reference>
<organism>
    <name type="scientific">Aspergillus ficuum</name>
    <dbReference type="NCBI Taxonomy" id="5058"/>
    <lineage>
        <taxon>Eukaryota</taxon>
        <taxon>Fungi</taxon>
        <taxon>Dikarya</taxon>
        <taxon>Ascomycota</taxon>
        <taxon>Pezizomycotina</taxon>
        <taxon>Eurotiomycetes</taxon>
        <taxon>Eurotiomycetidae</taxon>
        <taxon>Eurotiales</taxon>
        <taxon>Aspergillaceae</taxon>
        <taxon>Aspergillus</taxon>
    </lineage>
</organism>
<accession>Q96W96</accession>
<sequence length="303" mass="32591">MLSTHLLFLATTLLTSLFHPIAAHVAKRSGSLQQITDFGDNPTGVGMYIYVPNNLASNPGIVVAIHYCTGTGPGYYSNSPYATLSEQYGFIVIYPSSPYSGGCWDVSSQATLTHNGGGNSNSIANMVTWTISEYGADSKKVYVTGSSSGAMMTNVMAATYPELFAAGTVYSGVSAGCFYSDTNQVDGWNSTCAQGDVITTPEHWASIAEAMYPGYSGSRPKMQIYHGSVDTTLYPQNYYETCKQWAGVFGYDYSAPESTEANTPQTNYETTIWGDNLQGIFATGVGHTVPIHGDKDMEWFGFA</sequence>
<keyword id="KW-0119">Carbohydrate metabolism</keyword>
<keyword id="KW-0136">Cellulose degradation</keyword>
<keyword id="KW-0325">Glycoprotein</keyword>
<keyword id="KW-0378">Hydrolase</keyword>
<keyword id="KW-0624">Polysaccharide degradation</keyword>
<keyword id="KW-0964">Secreted</keyword>
<keyword id="KW-0719">Serine esterase</keyword>
<keyword id="KW-0732">Signal</keyword>
<protein>
    <recommendedName>
        <fullName>Acetylxylan esterase A</fullName>
        <ecNumber>3.1.1.72</ecNumber>
    </recommendedName>
</protein>
<feature type="signal peptide" evidence="2">
    <location>
        <begin position="1"/>
        <end position="23"/>
    </location>
</feature>
<feature type="chain" id="PRO_0000393476" description="Acetylxylan esterase A">
    <location>
        <begin position="24"/>
        <end position="303"/>
    </location>
</feature>
<feature type="active site" description="Charge relay system" evidence="1">
    <location>
        <position position="147"/>
    </location>
</feature>
<feature type="glycosylation site" description="N-linked (GlcNAc...) asparagine" evidence="2">
    <location>
        <position position="189"/>
    </location>
</feature>
<gene>
    <name type="primary">axeA</name>
    <name type="synonym">aceA</name>
</gene>
<proteinExistence type="evidence at protein level"/>
<evidence type="ECO:0000250" key="1"/>
<evidence type="ECO:0000255" key="2"/>
<evidence type="ECO:0000269" key="3">
    <source ref="1"/>
</evidence>
<evidence type="ECO:0000305" key="4"/>
<dbReference type="EC" id="3.1.1.72"/>
<dbReference type="EMBL" id="AF331757">
    <property type="protein sequence ID" value="AAK60128.1"/>
    <property type="molecule type" value="Genomic_DNA"/>
</dbReference>
<dbReference type="SMR" id="Q96W96"/>
<dbReference type="ESTHER" id="aspnc-axe1">
    <property type="family name" value="Esterase_phb"/>
</dbReference>
<dbReference type="GlyCosmos" id="Q96W96">
    <property type="glycosylation" value="1 site, No reported glycans"/>
</dbReference>
<dbReference type="UniPathway" id="UPA00114"/>
<dbReference type="GO" id="GO:0005576">
    <property type="term" value="C:extracellular region"/>
    <property type="evidence" value="ECO:0007669"/>
    <property type="project" value="UniProtKB-SubCell"/>
</dbReference>
<dbReference type="GO" id="GO:0046555">
    <property type="term" value="F:acetylxylan esterase activity"/>
    <property type="evidence" value="ECO:0007669"/>
    <property type="project" value="UniProtKB-EC"/>
</dbReference>
<dbReference type="GO" id="GO:0030245">
    <property type="term" value="P:cellulose catabolic process"/>
    <property type="evidence" value="ECO:0007669"/>
    <property type="project" value="UniProtKB-KW"/>
</dbReference>
<dbReference type="GO" id="GO:0045493">
    <property type="term" value="P:xylan catabolic process"/>
    <property type="evidence" value="ECO:0007669"/>
    <property type="project" value="UniProtKB-UniPathway"/>
</dbReference>
<dbReference type="Gene3D" id="3.40.50.1820">
    <property type="entry name" value="alpha/beta hydrolase"/>
    <property type="match status" value="1"/>
</dbReference>
<dbReference type="InterPro" id="IPR029058">
    <property type="entry name" value="AB_hydrolase_fold"/>
</dbReference>
<dbReference type="InterPro" id="IPR010126">
    <property type="entry name" value="Esterase_phb"/>
</dbReference>
<dbReference type="InterPro" id="IPR050955">
    <property type="entry name" value="Plant_Biomass_Hydrol_Est"/>
</dbReference>
<dbReference type="NCBIfam" id="TIGR01840">
    <property type="entry name" value="esterase_phb"/>
    <property type="match status" value="1"/>
</dbReference>
<dbReference type="PANTHER" id="PTHR43037:SF3">
    <property type="entry name" value="FERULOYL ESTERASE B"/>
    <property type="match status" value="1"/>
</dbReference>
<dbReference type="PANTHER" id="PTHR43037">
    <property type="entry name" value="UNNAMED PRODUCT-RELATED"/>
    <property type="match status" value="1"/>
</dbReference>
<dbReference type="Pfam" id="PF10503">
    <property type="entry name" value="Esterase_PHB"/>
    <property type="match status" value="1"/>
</dbReference>
<dbReference type="SUPFAM" id="SSF53474">
    <property type="entry name" value="alpha/beta-Hydrolases"/>
    <property type="match status" value="2"/>
</dbReference>
<comment type="function">
    <text evidence="3">Acetylxylan esterase involved in the hydrolysis of xylan, a major structural heterogeneous polysaccharide found in plant biomass representing the second most abundant polysaccharide in the biosphere, after cellulose. Degrades acetylated xylans by cleaving acetyl side groups from the hetero-xylan backbone.</text>
</comment>
<comment type="catalytic activity">
    <reaction>
        <text>Deacetylation of xylans and xylo-oligosaccharides.</text>
        <dbReference type="EC" id="3.1.1.72"/>
    </reaction>
</comment>
<comment type="biophysicochemical properties">
    <phDependence>
        <text evidence="3">Optimum pH is 7.0.</text>
    </phDependence>
    <temperatureDependence>
        <text evidence="3">Thermal stability decreased at temperatures above 40 degrees Celsius.</text>
    </temperatureDependence>
</comment>
<comment type="pathway">
    <text>Glycan degradation; xylan degradation.</text>
</comment>
<comment type="subunit">
    <text evidence="1">Monomer.</text>
</comment>
<comment type="subcellular location">
    <subcellularLocation>
        <location evidence="1">Secreted</location>
    </subcellularLocation>
</comment>
<comment type="PTM">
    <text evidence="3">Glycosylated.</text>
</comment>
<comment type="similarity">
    <text evidence="4">Belongs to the carbohydrate esterase 1 (CE1) family. AxeA subfamily.</text>
</comment>
<comment type="caution">
    <text evidence="4">The C-terminal carbohydrate-binding module (CBM) extension found in some acetylxylan esterases from other species is absent.</text>
</comment>
<name>AXE1_ASPFI</name>